<name>CLSA_SALDC</name>
<reference key="1">
    <citation type="journal article" date="2011" name="J. Bacteriol.">
        <title>Comparative genomics of 28 Salmonella enterica isolates: evidence for CRISPR-mediated adaptive sublineage evolution.</title>
        <authorList>
            <person name="Fricke W.F."/>
            <person name="Mammel M.K."/>
            <person name="McDermott P.F."/>
            <person name="Tartera C."/>
            <person name="White D.G."/>
            <person name="Leclerc J.E."/>
            <person name="Ravel J."/>
            <person name="Cebula T.A."/>
        </authorList>
    </citation>
    <scope>NUCLEOTIDE SEQUENCE [LARGE SCALE GENOMIC DNA]</scope>
    <source>
        <strain>CT_02021853</strain>
    </source>
</reference>
<comment type="function">
    <text evidence="1">Catalyzes the reversible phosphatidyl group transfer from one phosphatidylglycerol molecule to another to form cardiolipin (CL) (diphosphatidylglycerol) and glycerol.</text>
</comment>
<comment type="catalytic activity">
    <reaction evidence="1">
        <text>2 a 1,2-diacyl-sn-glycero-3-phospho-(1'-sn-glycerol) = a cardiolipin + glycerol</text>
        <dbReference type="Rhea" id="RHEA:31451"/>
        <dbReference type="ChEBI" id="CHEBI:17754"/>
        <dbReference type="ChEBI" id="CHEBI:62237"/>
        <dbReference type="ChEBI" id="CHEBI:64716"/>
    </reaction>
</comment>
<comment type="subcellular location">
    <subcellularLocation>
        <location evidence="1">Cell inner membrane</location>
        <topology evidence="1">Multi-pass membrane protein</topology>
    </subcellularLocation>
</comment>
<comment type="similarity">
    <text evidence="1">Belongs to the phospholipase D family. Cardiolipin synthase subfamily. ClsA sub-subfamily.</text>
</comment>
<feature type="chain" id="PRO_1000098912" description="Cardiolipin synthase A">
    <location>
        <begin position="1"/>
        <end position="486"/>
    </location>
</feature>
<feature type="transmembrane region" description="Helical" evidence="1">
    <location>
        <begin position="3"/>
        <end position="23"/>
    </location>
</feature>
<feature type="transmembrane region" description="Helical" evidence="1">
    <location>
        <begin position="38"/>
        <end position="58"/>
    </location>
</feature>
<feature type="domain" description="PLD phosphodiesterase 1" evidence="1">
    <location>
        <begin position="219"/>
        <end position="246"/>
    </location>
</feature>
<feature type="domain" description="PLD phosphodiesterase 2" evidence="1">
    <location>
        <begin position="399"/>
        <end position="426"/>
    </location>
</feature>
<feature type="active site" evidence="1">
    <location>
        <position position="224"/>
    </location>
</feature>
<feature type="active site" evidence="1">
    <location>
        <position position="226"/>
    </location>
</feature>
<feature type="active site" evidence="1">
    <location>
        <position position="231"/>
    </location>
</feature>
<feature type="active site" evidence="1">
    <location>
        <position position="404"/>
    </location>
</feature>
<feature type="active site" evidence="1">
    <location>
        <position position="406"/>
    </location>
</feature>
<feature type="active site" evidence="1">
    <location>
        <position position="411"/>
    </location>
</feature>
<protein>
    <recommendedName>
        <fullName evidence="1">Cardiolipin synthase A</fullName>
        <shortName evidence="1">CL synthase</shortName>
        <ecNumber evidence="1">2.7.8.-</ecNumber>
    </recommendedName>
</protein>
<gene>
    <name evidence="1" type="primary">clsA</name>
    <name type="synonym">cls</name>
    <name type="ordered locus">SeD_A1588</name>
</gene>
<dbReference type="EC" id="2.7.8.-" evidence="1"/>
<dbReference type="EMBL" id="CP001144">
    <property type="protein sequence ID" value="ACH76117.1"/>
    <property type="molecule type" value="Genomic_DNA"/>
</dbReference>
<dbReference type="RefSeq" id="WP_000206886.1">
    <property type="nucleotide sequence ID" value="NC_011205.1"/>
</dbReference>
<dbReference type="SMR" id="B5FU52"/>
<dbReference type="KEGG" id="sed:SeD_A1588"/>
<dbReference type="HOGENOM" id="CLU_038053_1_0_6"/>
<dbReference type="Proteomes" id="UP000008322">
    <property type="component" value="Chromosome"/>
</dbReference>
<dbReference type="GO" id="GO:0005886">
    <property type="term" value="C:plasma membrane"/>
    <property type="evidence" value="ECO:0007669"/>
    <property type="project" value="UniProtKB-SubCell"/>
</dbReference>
<dbReference type="GO" id="GO:0008808">
    <property type="term" value="F:cardiolipin synthase activity"/>
    <property type="evidence" value="ECO:0007669"/>
    <property type="project" value="InterPro"/>
</dbReference>
<dbReference type="GO" id="GO:0032049">
    <property type="term" value="P:cardiolipin biosynthetic process"/>
    <property type="evidence" value="ECO:0007669"/>
    <property type="project" value="InterPro"/>
</dbReference>
<dbReference type="CDD" id="cd09152">
    <property type="entry name" value="PLDc_EcCLS_like_1"/>
    <property type="match status" value="1"/>
</dbReference>
<dbReference type="CDD" id="cd09158">
    <property type="entry name" value="PLDc_EcCLS_like_2"/>
    <property type="match status" value="1"/>
</dbReference>
<dbReference type="FunFam" id="3.30.870.10:FF:000002">
    <property type="entry name" value="Cardiolipin synthase A"/>
    <property type="match status" value="1"/>
</dbReference>
<dbReference type="FunFam" id="3.30.870.10:FF:000003">
    <property type="entry name" value="Cardiolipin synthase A"/>
    <property type="match status" value="1"/>
</dbReference>
<dbReference type="Gene3D" id="3.30.870.10">
    <property type="entry name" value="Endonuclease Chain A"/>
    <property type="match status" value="2"/>
</dbReference>
<dbReference type="HAMAP" id="MF_00190">
    <property type="entry name" value="Cardiolipin_synth_ClsA"/>
    <property type="match status" value="1"/>
</dbReference>
<dbReference type="InterPro" id="IPR022924">
    <property type="entry name" value="Cardiolipin_synthase"/>
</dbReference>
<dbReference type="InterPro" id="IPR030840">
    <property type="entry name" value="CL_synthase_A"/>
</dbReference>
<dbReference type="InterPro" id="IPR027379">
    <property type="entry name" value="CLS_N"/>
</dbReference>
<dbReference type="InterPro" id="IPR025202">
    <property type="entry name" value="PLD-like_dom"/>
</dbReference>
<dbReference type="InterPro" id="IPR001736">
    <property type="entry name" value="PLipase_D/transphosphatidylase"/>
</dbReference>
<dbReference type="NCBIfam" id="TIGR04265">
    <property type="entry name" value="bac_cardiolipin"/>
    <property type="match status" value="1"/>
</dbReference>
<dbReference type="PANTHER" id="PTHR21248">
    <property type="entry name" value="CARDIOLIPIN SYNTHASE"/>
    <property type="match status" value="1"/>
</dbReference>
<dbReference type="PANTHER" id="PTHR21248:SF22">
    <property type="entry name" value="PHOSPHOLIPASE D"/>
    <property type="match status" value="1"/>
</dbReference>
<dbReference type="Pfam" id="PF13091">
    <property type="entry name" value="PLDc_2"/>
    <property type="match status" value="2"/>
</dbReference>
<dbReference type="Pfam" id="PF13396">
    <property type="entry name" value="PLDc_N"/>
    <property type="match status" value="1"/>
</dbReference>
<dbReference type="SMART" id="SM00155">
    <property type="entry name" value="PLDc"/>
    <property type="match status" value="2"/>
</dbReference>
<dbReference type="SUPFAM" id="SSF56024">
    <property type="entry name" value="Phospholipase D/nuclease"/>
    <property type="match status" value="2"/>
</dbReference>
<dbReference type="PROSITE" id="PS50035">
    <property type="entry name" value="PLD"/>
    <property type="match status" value="2"/>
</dbReference>
<proteinExistence type="inferred from homology"/>
<organism>
    <name type="scientific">Salmonella dublin (strain CT_02021853)</name>
    <dbReference type="NCBI Taxonomy" id="439851"/>
    <lineage>
        <taxon>Bacteria</taxon>
        <taxon>Pseudomonadati</taxon>
        <taxon>Pseudomonadota</taxon>
        <taxon>Gammaproteobacteria</taxon>
        <taxon>Enterobacterales</taxon>
        <taxon>Enterobacteriaceae</taxon>
        <taxon>Salmonella</taxon>
    </lineage>
</organism>
<sequence>MTTFYTVVSWLVILGYWVLIAGVTLRILMKRRAVPSAMAWLLIIYILPLVGIIAYLSVGELHLGKRRAERARAMWPSTAKWLNDLKACKHIFAQENSSVASSLFKLCERRQGIAGVKGNQLQLLTDSDDVMQALIRDIQLARHNIEMVFYIWQPGGMADQVAESLMAAARRGIHCRLMLDSAGSVAFFRSPWAAMMRNAGIEVVEALKVNLMRVFLRRMDLRQHRKMVMIDNYIAYTGSMNMVDPRFFKQDAGVGQWVDLMARMEGPVATAMGIVYSCDWEIETGKRILPPPPDVNIMPFEQASGHTIHTIASGPGFPEDLIHQALLTATYAAREYLIMTTPYFVPSDDLLHAICTAAQRGVDVSIILPRKNDSLLVGWASRAFFSELLAAGVKIYQFEGGLLHTKSVLVDGELSLVGTVNLDMRSLWLNFEITLVIDDTGFGADLAAVQDDYISRSRLLDARLWVKRPLWQRITERLFYFFSPLL</sequence>
<keyword id="KW-0997">Cell inner membrane</keyword>
<keyword id="KW-1003">Cell membrane</keyword>
<keyword id="KW-0444">Lipid biosynthesis</keyword>
<keyword id="KW-0443">Lipid metabolism</keyword>
<keyword id="KW-0472">Membrane</keyword>
<keyword id="KW-0594">Phospholipid biosynthesis</keyword>
<keyword id="KW-1208">Phospholipid metabolism</keyword>
<keyword id="KW-0677">Repeat</keyword>
<keyword id="KW-0808">Transferase</keyword>
<keyword id="KW-0812">Transmembrane</keyword>
<keyword id="KW-1133">Transmembrane helix</keyword>
<evidence type="ECO:0000255" key="1">
    <source>
        <dbReference type="HAMAP-Rule" id="MF_00190"/>
    </source>
</evidence>
<accession>B5FU52</accession>